<dbReference type="EMBL" id="AF262240">
    <property type="protein sequence ID" value="AAF87716.1"/>
    <property type="molecule type" value="mRNA"/>
</dbReference>
<dbReference type="EMBL" id="AY313210">
    <property type="protein sequence ID" value="AAQ86939.1"/>
    <property type="molecule type" value="mRNA"/>
</dbReference>
<dbReference type="EMBL" id="AK024768">
    <property type="protein sequence ID" value="BAB14994.1"/>
    <property type="molecule type" value="mRNA"/>
</dbReference>
<dbReference type="EMBL" id="AK057778">
    <property type="protein sequence ID" value="BAB71568.1"/>
    <property type="molecule type" value="mRNA"/>
</dbReference>
<dbReference type="EMBL" id="AK315629">
    <property type="protein sequence ID" value="BAG37997.1"/>
    <property type="molecule type" value="mRNA"/>
</dbReference>
<dbReference type="EMBL" id="AF298770">
    <property type="protein sequence ID" value="AAG22077.1"/>
    <property type="molecule type" value="mRNA"/>
</dbReference>
<dbReference type="EMBL" id="AC048338">
    <property type="status" value="NOT_ANNOTATED_CDS"/>
    <property type="molecule type" value="Genomic_DNA"/>
</dbReference>
<dbReference type="EMBL" id="BC004417">
    <property type="protein sequence ID" value="AAH04417.1"/>
    <property type="molecule type" value="mRNA"/>
</dbReference>
<dbReference type="EMBL" id="BC011909">
    <property type="protein sequence ID" value="AAH11909.1"/>
    <property type="molecule type" value="mRNA"/>
</dbReference>
<dbReference type="CCDS" id="CCDS9228.1">
    <molecule id="Q9NR28-1"/>
</dbReference>
<dbReference type="CCDS" id="CCDS9229.1">
    <molecule id="Q9NR28-3"/>
</dbReference>
<dbReference type="RefSeq" id="NP_001265231.1">
    <property type="nucleotide sequence ID" value="NM_001278302.1"/>
</dbReference>
<dbReference type="RefSeq" id="NP_001265232.1">
    <property type="nucleotide sequence ID" value="NM_001278303.1"/>
</dbReference>
<dbReference type="RefSeq" id="NP_001265233.1">
    <molecule id="Q9NR28-2"/>
    <property type="nucleotide sequence ID" value="NM_001278304.2"/>
</dbReference>
<dbReference type="RefSeq" id="NP_001265271.1">
    <molecule id="Q9NR28-3"/>
    <property type="nucleotide sequence ID" value="NM_001278342.1"/>
</dbReference>
<dbReference type="RefSeq" id="NP_001358262.1">
    <molecule id="Q9NR28-1"/>
    <property type="nucleotide sequence ID" value="NM_001371333.1"/>
</dbReference>
<dbReference type="RefSeq" id="NP_063940.1">
    <molecule id="Q9NR28-1"/>
    <property type="nucleotide sequence ID" value="NM_019887.6"/>
</dbReference>
<dbReference type="RefSeq" id="NP_620308.1">
    <molecule id="Q9NR28-2"/>
    <property type="nucleotide sequence ID" value="NM_138930.3"/>
</dbReference>
<dbReference type="PDB" id="1FEW">
    <property type="method" value="X-ray"/>
    <property type="resolution" value="2.20 A"/>
    <property type="chains" value="A=56-239"/>
</dbReference>
<dbReference type="PDB" id="1G3F">
    <property type="method" value="NMR"/>
    <property type="chains" value="B=56-64"/>
</dbReference>
<dbReference type="PDB" id="1G73">
    <property type="method" value="X-ray"/>
    <property type="resolution" value="2.00 A"/>
    <property type="chains" value="A/B=56-217"/>
</dbReference>
<dbReference type="PDB" id="1OXQ">
    <property type="method" value="X-ray"/>
    <property type="resolution" value="2.30 A"/>
    <property type="chains" value="F=56-64"/>
</dbReference>
<dbReference type="PDB" id="1TW6">
    <property type="method" value="X-ray"/>
    <property type="resolution" value="1.71 A"/>
    <property type="chains" value="C/D=56-64"/>
</dbReference>
<dbReference type="PDB" id="1XB0">
    <property type="method" value="X-ray"/>
    <property type="resolution" value="2.20 A"/>
    <property type="chains" value="G/H/I/J/K/L=56-62"/>
</dbReference>
<dbReference type="PDB" id="1XB1">
    <property type="method" value="X-ray"/>
    <property type="resolution" value="2.70 A"/>
    <property type="chains" value="G/H/I/J/K/L=56-62"/>
</dbReference>
<dbReference type="PDB" id="3D9U">
    <property type="method" value="X-ray"/>
    <property type="resolution" value="2.30 A"/>
    <property type="chains" value="B=56-61"/>
</dbReference>
<dbReference type="PDB" id="3UIH">
    <property type="method" value="X-ray"/>
    <property type="resolution" value="2.40 A"/>
    <property type="chains" value="P/Q=56-70"/>
</dbReference>
<dbReference type="PDB" id="3UIJ">
    <property type="method" value="X-ray"/>
    <property type="resolution" value="2.70 A"/>
    <property type="chains" value="P/Q=56-70"/>
</dbReference>
<dbReference type="PDB" id="4TX5">
    <property type="method" value="X-ray"/>
    <property type="resolution" value="1.80 A"/>
    <property type="chains" value="A/B=56-239"/>
</dbReference>
<dbReference type="PDB" id="6JX6">
    <property type="method" value="X-ray"/>
    <property type="resolution" value="2.81 A"/>
    <property type="chains" value="A/B/C/D=56-239"/>
</dbReference>
<dbReference type="PDB" id="8ATO">
    <property type="method" value="EM"/>
    <property type="resolution" value="3.00 A"/>
    <property type="chains" value="C/D=56-239"/>
</dbReference>
<dbReference type="PDB" id="8AUW">
    <property type="method" value="EM"/>
    <property type="resolution" value="7.20 A"/>
    <property type="chains" value="C/D=56-239"/>
</dbReference>
<dbReference type="PDB" id="8E2I">
    <property type="method" value="EM"/>
    <property type="resolution" value="3.04 A"/>
    <property type="chains" value="E/F=56-239"/>
</dbReference>
<dbReference type="PDB" id="8E2J">
    <property type="method" value="EM"/>
    <property type="resolution" value="3.44 A"/>
    <property type="chains" value="A/B=56-239"/>
</dbReference>
<dbReference type="PDBsum" id="1FEW"/>
<dbReference type="PDBsum" id="1G3F"/>
<dbReference type="PDBsum" id="1G73"/>
<dbReference type="PDBsum" id="1OXQ"/>
<dbReference type="PDBsum" id="1TW6"/>
<dbReference type="PDBsum" id="1XB0"/>
<dbReference type="PDBsum" id="1XB1"/>
<dbReference type="PDBsum" id="3D9U"/>
<dbReference type="PDBsum" id="3UIH"/>
<dbReference type="PDBsum" id="3UIJ"/>
<dbReference type="PDBsum" id="4TX5"/>
<dbReference type="PDBsum" id="6JX6"/>
<dbReference type="PDBsum" id="8ATO"/>
<dbReference type="PDBsum" id="8AUW"/>
<dbReference type="PDBsum" id="8E2I"/>
<dbReference type="PDBsum" id="8E2J"/>
<dbReference type="EMDB" id="EMD-15654"/>
<dbReference type="EMDB" id="EMD-15675"/>
<dbReference type="EMDB" id="EMD-27837"/>
<dbReference type="EMDB" id="EMD-27838"/>
<dbReference type="SMR" id="Q9NR28"/>
<dbReference type="BioGRID" id="121157">
    <property type="interactions" value="283"/>
</dbReference>
<dbReference type="DIP" id="DIP-27627N"/>
<dbReference type="FunCoup" id="Q9NR28">
    <property type="interactions" value="741"/>
</dbReference>
<dbReference type="IntAct" id="Q9NR28">
    <property type="interactions" value="86"/>
</dbReference>
<dbReference type="MINT" id="Q9NR28"/>
<dbReference type="STRING" id="9606.ENSP00000398495"/>
<dbReference type="DrugBank" id="DB12695">
    <property type="generic name" value="Phenethyl Isothiocyanate"/>
</dbReference>
<dbReference type="MoonDB" id="Q9NR28">
    <property type="type" value="Predicted"/>
</dbReference>
<dbReference type="GlyGen" id="Q9NR28">
    <property type="glycosylation" value="1 site, 1 O-linked glycan (1 site)"/>
</dbReference>
<dbReference type="iPTMnet" id="Q9NR28"/>
<dbReference type="MetOSite" id="Q9NR28"/>
<dbReference type="PhosphoSitePlus" id="Q9NR28"/>
<dbReference type="BioMuta" id="DIABLO"/>
<dbReference type="DMDM" id="18203316"/>
<dbReference type="jPOST" id="Q9NR28"/>
<dbReference type="MassIVE" id="Q9NR28"/>
<dbReference type="PaxDb" id="9606-ENSP00000398495"/>
<dbReference type="PeptideAtlas" id="Q9NR28"/>
<dbReference type="ProteomicsDB" id="82262">
    <molecule id="Q9NR28-1"/>
</dbReference>
<dbReference type="ProteomicsDB" id="82263">
    <molecule id="Q9NR28-2"/>
</dbReference>
<dbReference type="ProteomicsDB" id="82264">
    <molecule id="Q9NR28-3"/>
</dbReference>
<dbReference type="Pumba" id="Q9NR28"/>
<dbReference type="TopDownProteomics" id="Q9NR28-1">
    <molecule id="Q9NR28-1"/>
</dbReference>
<dbReference type="TopDownProteomics" id="Q9NR28-2">
    <molecule id="Q9NR28-2"/>
</dbReference>
<dbReference type="TopDownProteomics" id="Q9NR28-3">
    <molecule id="Q9NR28-3"/>
</dbReference>
<dbReference type="Antibodypedia" id="1070">
    <property type="antibodies" value="689 antibodies from 45 providers"/>
</dbReference>
<dbReference type="DNASU" id="56616"/>
<dbReference type="Ensembl" id="ENST00000353548.11">
    <molecule id="Q9NR28-3"/>
    <property type="protein sequence ID" value="ENSP00000320343.6"/>
    <property type="gene ID" value="ENSG00000184047.21"/>
</dbReference>
<dbReference type="Ensembl" id="ENST00000464942.7">
    <molecule id="Q9NR28-1"/>
    <property type="protein sequence ID" value="ENSP00000442360.2"/>
    <property type="gene ID" value="ENSG00000184047.21"/>
</dbReference>
<dbReference type="GeneID" id="56616"/>
<dbReference type="KEGG" id="hsa:56616"/>
<dbReference type="MANE-Select" id="ENST00000464942.7">
    <property type="protein sequence ID" value="ENSP00000442360.2"/>
    <property type="RefSeq nucleotide sequence ID" value="NM_001371333.1"/>
    <property type="RefSeq protein sequence ID" value="NP_001358262.1"/>
</dbReference>
<dbReference type="UCSC" id="uc010tab.4">
    <molecule id="Q9NR28-1"/>
    <property type="organism name" value="human"/>
</dbReference>
<dbReference type="AGR" id="HGNC:21528"/>
<dbReference type="CTD" id="56616"/>
<dbReference type="DisGeNET" id="56616"/>
<dbReference type="GeneCards" id="DIABLO"/>
<dbReference type="HGNC" id="HGNC:21528">
    <property type="gene designation" value="DIABLO"/>
</dbReference>
<dbReference type="HPA" id="ENSG00000184047">
    <property type="expression patterns" value="Low tissue specificity"/>
</dbReference>
<dbReference type="MalaCards" id="DIABLO"/>
<dbReference type="MIM" id="605219">
    <property type="type" value="gene"/>
</dbReference>
<dbReference type="MIM" id="614152">
    <property type="type" value="phenotype"/>
</dbReference>
<dbReference type="neXtProt" id="NX_Q9NR28"/>
<dbReference type="OpenTargets" id="ENSG00000184047"/>
<dbReference type="Orphanet" id="90635">
    <property type="disease" value="Rare autosomal dominant non-syndromic sensorineural deafness type DFNA"/>
</dbReference>
<dbReference type="PharmGKB" id="PA134945044"/>
<dbReference type="VEuPathDB" id="HostDB:ENSG00000184047"/>
<dbReference type="eggNOG" id="ENOG502RA48">
    <property type="taxonomic scope" value="Eukaryota"/>
</dbReference>
<dbReference type="GeneTree" id="ENSGT00390000007237"/>
<dbReference type="HOGENOM" id="CLU_098879_0_0_1"/>
<dbReference type="InParanoid" id="Q9NR28"/>
<dbReference type="OMA" id="WRCCAFF"/>
<dbReference type="OrthoDB" id="6153032at2759"/>
<dbReference type="PAN-GO" id="Q9NR28">
    <property type="GO annotations" value="4 GO annotations based on evolutionary models"/>
</dbReference>
<dbReference type="PhylomeDB" id="Q9NR28"/>
<dbReference type="TreeFam" id="TF102048"/>
<dbReference type="PathwayCommons" id="Q9NR28"/>
<dbReference type="Reactome" id="R-HSA-111457">
    <property type="pathway name" value="Release of apoptotic factors from the mitochondria"/>
</dbReference>
<dbReference type="Reactome" id="R-HSA-111463">
    <property type="pathway name" value="SMAC (DIABLO) binds to IAPs"/>
</dbReference>
<dbReference type="Reactome" id="R-HSA-111464">
    <property type="pathway name" value="SMAC(DIABLO)-mediated dissociation of IAP:caspase complexes"/>
</dbReference>
<dbReference type="Reactome" id="R-HSA-111469">
    <property type="pathway name" value="SMAC, XIAP-regulated apoptotic response"/>
</dbReference>
<dbReference type="Reactome" id="R-HSA-9627069">
    <property type="pathway name" value="Regulation of the apoptosome activity"/>
</dbReference>
<dbReference type="SignaLink" id="Q9NR28"/>
<dbReference type="SIGNOR" id="Q9NR28"/>
<dbReference type="BioGRID-ORCS" id="56616">
    <property type="hits" value="29 hits in 1160 CRISPR screens"/>
</dbReference>
<dbReference type="ChiTaRS" id="DIABLO">
    <property type="organism name" value="human"/>
</dbReference>
<dbReference type="EvolutionaryTrace" id="Q9NR28"/>
<dbReference type="GeneWiki" id="Diablo_homolog"/>
<dbReference type="GenomeRNAi" id="56616"/>
<dbReference type="Pharos" id="Q9NR28">
    <property type="development level" value="Tbio"/>
</dbReference>
<dbReference type="PRO" id="PR:Q9NR28"/>
<dbReference type="Proteomes" id="UP000005640">
    <property type="component" value="Chromosome 12"/>
</dbReference>
<dbReference type="RNAct" id="Q9NR28">
    <property type="molecule type" value="protein"/>
</dbReference>
<dbReference type="Bgee" id="ENSG00000184047">
    <property type="expression patterns" value="Expressed in right testis and 104 other cell types or tissues"/>
</dbReference>
<dbReference type="ExpressionAtlas" id="Q9NR28">
    <property type="expression patterns" value="baseline and differential"/>
</dbReference>
<dbReference type="GO" id="GO:0035631">
    <property type="term" value="C:CD40 receptor complex"/>
    <property type="evidence" value="ECO:0000250"/>
    <property type="project" value="BHF-UCL"/>
</dbReference>
<dbReference type="GO" id="GO:0009898">
    <property type="term" value="C:cytoplasmic side of plasma membrane"/>
    <property type="evidence" value="ECO:0000250"/>
    <property type="project" value="BHF-UCL"/>
</dbReference>
<dbReference type="GO" id="GO:0005829">
    <property type="term" value="C:cytosol"/>
    <property type="evidence" value="ECO:0000314"/>
    <property type="project" value="UniProtKB"/>
</dbReference>
<dbReference type="GO" id="GO:0005758">
    <property type="term" value="C:mitochondrial intermembrane space"/>
    <property type="evidence" value="ECO:0000304"/>
    <property type="project" value="UniProtKB"/>
</dbReference>
<dbReference type="GO" id="GO:0005739">
    <property type="term" value="C:mitochondrion"/>
    <property type="evidence" value="ECO:0000314"/>
    <property type="project" value="HPA"/>
</dbReference>
<dbReference type="GO" id="GO:0006915">
    <property type="term" value="P:apoptotic process"/>
    <property type="evidence" value="ECO:0000304"/>
    <property type="project" value="ProtInc"/>
</dbReference>
<dbReference type="GO" id="GO:0097190">
    <property type="term" value="P:apoptotic signaling pathway"/>
    <property type="evidence" value="ECO:0000315"/>
    <property type="project" value="UniProtKB"/>
</dbReference>
<dbReference type="GO" id="GO:0008625">
    <property type="term" value="P:extrinsic apoptotic signaling pathway via death domain receptors"/>
    <property type="evidence" value="ECO:0000304"/>
    <property type="project" value="ProtInc"/>
</dbReference>
<dbReference type="GO" id="GO:0097193">
    <property type="term" value="P:intrinsic apoptotic signaling pathway"/>
    <property type="evidence" value="ECO:0000304"/>
    <property type="project" value="UniProtKB"/>
</dbReference>
<dbReference type="GO" id="GO:0008631">
    <property type="term" value="P:intrinsic apoptotic signaling pathway in response to oxidative stress"/>
    <property type="evidence" value="ECO:0000318"/>
    <property type="project" value="GO_Central"/>
</dbReference>
<dbReference type="GO" id="GO:0051402">
    <property type="term" value="P:neuron apoptotic process"/>
    <property type="evidence" value="ECO:0000318"/>
    <property type="project" value="GO_Central"/>
</dbReference>
<dbReference type="GO" id="GO:0043065">
    <property type="term" value="P:positive regulation of apoptotic process"/>
    <property type="evidence" value="ECO:0000304"/>
    <property type="project" value="UniProtKB"/>
</dbReference>
<dbReference type="DisProt" id="DP01619"/>
<dbReference type="FunFam" id="1.20.58.70:FF:000012">
    <property type="entry name" value="diablo homolog, mitochondrial isoform X1"/>
    <property type="match status" value="1"/>
</dbReference>
<dbReference type="Gene3D" id="1.20.58.70">
    <property type="match status" value="1"/>
</dbReference>
<dbReference type="InterPro" id="IPR009062">
    <property type="entry name" value="Smac/DIABLO-like_sf"/>
</dbReference>
<dbReference type="InterPro" id="IPR015142">
    <property type="entry name" value="Smac_DIABLO"/>
</dbReference>
<dbReference type="PANTHER" id="PTHR32247">
    <property type="entry name" value="DIABLO HOMOLOG, MITOCHONDRIAL"/>
    <property type="match status" value="1"/>
</dbReference>
<dbReference type="PANTHER" id="PTHR32247:SF3">
    <property type="entry name" value="DIABLO IAP-BINDING MITOCHONDRIAL PROTEIN"/>
    <property type="match status" value="1"/>
</dbReference>
<dbReference type="Pfam" id="PF09057">
    <property type="entry name" value="Smac_DIABLO"/>
    <property type="match status" value="1"/>
</dbReference>
<dbReference type="SUPFAM" id="SSF46984">
    <property type="entry name" value="Smac/diablo"/>
    <property type="match status" value="1"/>
</dbReference>
<feature type="transit peptide" description="Mitochondrion" evidence="14">
    <location>
        <begin position="1"/>
        <end position="21"/>
    </location>
</feature>
<feature type="chain" id="PRO_0000458409" description="Diablo IAP-binding mitochondrial protein" evidence="14">
    <location>
        <begin position="22"/>
        <end position="239"/>
    </location>
</feature>
<feature type="chain" id="PRO_0000021072" description="Diablo IAP-binding mitochondrial protein, cleaved form" evidence="14">
    <location>
        <begin position="56"/>
        <end position="239"/>
    </location>
</feature>
<feature type="region of interest" description="Disordered" evidence="2">
    <location>
        <begin position="217"/>
        <end position="239"/>
    </location>
</feature>
<feature type="short sequence motif" description="IAP-binding">
    <location>
        <begin position="56"/>
        <end position="60"/>
    </location>
</feature>
<feature type="site" description="Cleavage; by PARL" evidence="14">
    <location>
        <begin position="55"/>
        <end position="56"/>
    </location>
</feature>
<feature type="splice variant" id="VSP_004397" description="In isoform 2." evidence="19">
    <original>MAALKSWLSRSVTSFFRYRQCLCVPVVANFKKRCFSELIRPWHKTVTIGFGVTLCAVPIA</original>
    <variation>MKSDFYF</variation>
    <location>
        <begin position="1"/>
        <end position="60"/>
    </location>
</feature>
<feature type="splice variant" id="VSP_042785" description="In isoform 3." evidence="20">
    <location>
        <begin position="62"/>
        <end position="105"/>
    </location>
</feature>
<feature type="sequence variant" id="VAR_066487" description="In DFNA64; does not increase apoptotic activity compared to wild-type; enhances the degradation of mutant and wild-type protein via heterodimerization; cells expressing the mutant protein show increased susceptibility to calcium-induced loss of mitochondrial potential compared to wild-type, indicating increased sensitivity to mitochondrial stress and suggestive of mitochondrial dysfunction; dbSNP:rs387906893." evidence="12">
    <original>S</original>
    <variation>L</variation>
    <location>
        <position position="126"/>
    </location>
</feature>
<feature type="mutagenesis site" description="Fails to inhibit BIRC6 activity. Fails to inhibit digestion of BIRC6 by CASP3, CASP7 or HTRA2 mutant 'A-306'." evidence="15">
    <original>A</original>
    <variation>M</variation>
    <location>
        <position position="56"/>
    </location>
</feature>
<feature type="mutagenesis site" description="Monomeric. Impairs interaction with BIRC6. Impairs ability to inhibit BIRC6 caspase ubiquitination." evidence="17">
    <original>V</original>
    <variation>D</variation>
    <location>
        <position position="81"/>
    </location>
</feature>
<feature type="sequence conflict" description="In Ref. 4; BAB71568." evidence="21" ref="4">
    <original>K</original>
    <variation>E</variation>
    <location>
        <position position="32"/>
    </location>
</feature>
<feature type="sequence conflict" description="In Ref. 4; BAB14994." evidence="21" ref="4">
    <original>K</original>
    <variation>R</variation>
    <location>
        <position position="44"/>
    </location>
</feature>
<feature type="sequence conflict" description="In Ref. 4; BAB71568." evidence="21" ref="4">
    <original>E</original>
    <variation>K</variation>
    <location>
        <position position="165"/>
    </location>
</feature>
<feature type="strand" evidence="31">
    <location>
        <begin position="57"/>
        <end position="59"/>
    </location>
</feature>
<feature type="helix" evidence="32">
    <location>
        <begin position="71"/>
        <end position="120"/>
    </location>
</feature>
<feature type="strand" evidence="30">
    <location>
        <begin position="123"/>
        <end position="125"/>
    </location>
</feature>
<feature type="helix" evidence="32">
    <location>
        <begin position="126"/>
        <end position="173"/>
    </location>
</feature>
<feature type="helix" evidence="32">
    <location>
        <begin position="177"/>
        <end position="239"/>
    </location>
</feature>
<gene>
    <name evidence="22" type="primary">DIABLO</name>
    <name evidence="22" type="synonym">SMAC</name>
</gene>
<name>DBLOH_HUMAN</name>
<reference key="1">
    <citation type="journal article" date="2000" name="Cell">
        <title>Smac, a mitochondrial protein that promotes cytochrome c-dependent caspase activation by eliminating IAP inhibition.</title>
        <authorList>
            <person name="Du C."/>
            <person name="Fang M."/>
            <person name="Li Y."/>
            <person name="Li L."/>
            <person name="Wang X."/>
        </authorList>
    </citation>
    <scope>NUCLEOTIDE SEQUENCE [MRNA] (ISOFORM 1)</scope>
    <scope>PARTIAL PROTEIN SEQUENCE</scope>
    <scope>FUNCTION</scope>
    <scope>SUBCELLULAR LOCATION</scope>
    <scope>TISSUE SPECIFICITY</scope>
</reference>
<reference key="2">
    <citation type="journal article" date="2000" name="J. Biol. Chem.">
        <title>Molecular determinants of the caspase-promoting activity of Smac/DIABLO and its role in the death receptor pathway.</title>
        <authorList>
            <person name="Srinivasula S.M."/>
            <person name="Datta P."/>
            <person name="Fan X.J."/>
            <person name="Fernandes-Alnemri T."/>
            <person name="Huang Z."/>
            <person name="Alnemri E.S."/>
        </authorList>
    </citation>
    <scope>NUCLEOTIDE SEQUENCE [MRNA] (ISOFORM 2)</scope>
    <scope>CHARACTERIZATION</scope>
</reference>
<reference key="3">
    <citation type="journal article" date="2003" name="J. Biol. Chem.">
        <title>Smac3, a novel Smac/DIABLO splicing variant, attenuates the stability and apoptosis-inhibiting activity of X-linked inhibitor of apoptosis protein.</title>
        <authorList>
            <person name="Fu J."/>
            <person name="Jin Y."/>
            <person name="Arend L.J."/>
        </authorList>
    </citation>
    <scope>NUCLEOTIDE SEQUENCE [MRNA] (ISOFORM 3)</scope>
    <scope>FUNCTION</scope>
    <scope>SUBCELLULAR LOCATION</scope>
    <scope>TISSUE SPECIFICITY</scope>
</reference>
<reference key="4">
    <citation type="journal article" date="2004" name="Nat. Genet.">
        <title>Complete sequencing and characterization of 21,243 full-length human cDNAs.</title>
        <authorList>
            <person name="Ota T."/>
            <person name="Suzuki Y."/>
            <person name="Nishikawa T."/>
            <person name="Otsuki T."/>
            <person name="Sugiyama T."/>
            <person name="Irie R."/>
            <person name="Wakamatsu A."/>
            <person name="Hayashi K."/>
            <person name="Sato H."/>
            <person name="Nagai K."/>
            <person name="Kimura K."/>
            <person name="Makita H."/>
            <person name="Sekine M."/>
            <person name="Obayashi M."/>
            <person name="Nishi T."/>
            <person name="Shibahara T."/>
            <person name="Tanaka T."/>
            <person name="Ishii S."/>
            <person name="Yamamoto J."/>
            <person name="Saito K."/>
            <person name="Kawai Y."/>
            <person name="Isono Y."/>
            <person name="Nakamura Y."/>
            <person name="Nagahari K."/>
            <person name="Murakami K."/>
            <person name="Yasuda T."/>
            <person name="Iwayanagi T."/>
            <person name="Wagatsuma M."/>
            <person name="Shiratori A."/>
            <person name="Sudo H."/>
            <person name="Hosoiri T."/>
            <person name="Kaku Y."/>
            <person name="Kodaira H."/>
            <person name="Kondo H."/>
            <person name="Sugawara M."/>
            <person name="Takahashi M."/>
            <person name="Kanda K."/>
            <person name="Yokoi T."/>
            <person name="Furuya T."/>
            <person name="Kikkawa E."/>
            <person name="Omura Y."/>
            <person name="Abe K."/>
            <person name="Kamihara K."/>
            <person name="Katsuta N."/>
            <person name="Sato K."/>
            <person name="Tanikawa M."/>
            <person name="Yamazaki M."/>
            <person name="Ninomiya K."/>
            <person name="Ishibashi T."/>
            <person name="Yamashita H."/>
            <person name="Murakawa K."/>
            <person name="Fujimori K."/>
            <person name="Tanai H."/>
            <person name="Kimata M."/>
            <person name="Watanabe M."/>
            <person name="Hiraoka S."/>
            <person name="Chiba Y."/>
            <person name="Ishida S."/>
            <person name="Ono Y."/>
            <person name="Takiguchi S."/>
            <person name="Watanabe S."/>
            <person name="Yosida M."/>
            <person name="Hotuta T."/>
            <person name="Kusano J."/>
            <person name="Kanehori K."/>
            <person name="Takahashi-Fujii A."/>
            <person name="Hara H."/>
            <person name="Tanase T.-O."/>
            <person name="Nomura Y."/>
            <person name="Togiya S."/>
            <person name="Komai F."/>
            <person name="Hara R."/>
            <person name="Takeuchi K."/>
            <person name="Arita M."/>
            <person name="Imose N."/>
            <person name="Musashino K."/>
            <person name="Yuuki H."/>
            <person name="Oshima A."/>
            <person name="Sasaki N."/>
            <person name="Aotsuka S."/>
            <person name="Yoshikawa Y."/>
            <person name="Matsunawa H."/>
            <person name="Ichihara T."/>
            <person name="Shiohata N."/>
            <person name="Sano S."/>
            <person name="Moriya S."/>
            <person name="Momiyama H."/>
            <person name="Satoh N."/>
            <person name="Takami S."/>
            <person name="Terashima Y."/>
            <person name="Suzuki O."/>
            <person name="Nakagawa S."/>
            <person name="Senoh A."/>
            <person name="Mizoguchi H."/>
            <person name="Goto Y."/>
            <person name="Shimizu F."/>
            <person name="Wakebe H."/>
            <person name="Hishigaki H."/>
            <person name="Watanabe T."/>
            <person name="Sugiyama A."/>
            <person name="Takemoto M."/>
            <person name="Kawakami B."/>
            <person name="Yamazaki M."/>
            <person name="Watanabe K."/>
            <person name="Kumagai A."/>
            <person name="Itakura S."/>
            <person name="Fukuzumi Y."/>
            <person name="Fujimori Y."/>
            <person name="Komiyama M."/>
            <person name="Tashiro H."/>
            <person name="Tanigami A."/>
            <person name="Fujiwara T."/>
            <person name="Ono T."/>
            <person name="Yamada K."/>
            <person name="Fujii Y."/>
            <person name="Ozaki K."/>
            <person name="Hirao M."/>
            <person name="Ohmori Y."/>
            <person name="Kawabata A."/>
            <person name="Hikiji T."/>
            <person name="Kobatake N."/>
            <person name="Inagaki H."/>
            <person name="Ikema Y."/>
            <person name="Okamoto S."/>
            <person name="Okitani R."/>
            <person name="Kawakami T."/>
            <person name="Noguchi S."/>
            <person name="Itoh T."/>
            <person name="Shigeta K."/>
            <person name="Senba T."/>
            <person name="Matsumura K."/>
            <person name="Nakajima Y."/>
            <person name="Mizuno T."/>
            <person name="Morinaga M."/>
            <person name="Sasaki M."/>
            <person name="Togashi T."/>
            <person name="Oyama M."/>
            <person name="Hata H."/>
            <person name="Watanabe M."/>
            <person name="Komatsu T."/>
            <person name="Mizushima-Sugano J."/>
            <person name="Satoh T."/>
            <person name="Shirai Y."/>
            <person name="Takahashi Y."/>
            <person name="Nakagawa K."/>
            <person name="Okumura K."/>
            <person name="Nagase T."/>
            <person name="Nomura N."/>
            <person name="Kikuchi H."/>
            <person name="Masuho Y."/>
            <person name="Yamashita R."/>
            <person name="Nakai K."/>
            <person name="Yada T."/>
            <person name="Nakamura Y."/>
            <person name="Ohara O."/>
            <person name="Isogai T."/>
            <person name="Sugano S."/>
        </authorList>
    </citation>
    <scope>NUCLEOTIDE SEQUENCE [LARGE SCALE MRNA] (ISOFORM 1)</scope>
    <source>
        <tissue>Stomach</tissue>
    </source>
</reference>
<reference key="5">
    <citation type="journal article" date="2006" name="Nature">
        <title>The finished DNA sequence of human chromosome 12.</title>
        <authorList>
            <person name="Scherer S.E."/>
            <person name="Muzny D.M."/>
            <person name="Buhay C.J."/>
            <person name="Chen R."/>
            <person name="Cree A."/>
            <person name="Ding Y."/>
            <person name="Dugan-Rocha S."/>
            <person name="Gill R."/>
            <person name="Gunaratne P."/>
            <person name="Harris R.A."/>
            <person name="Hawes A.C."/>
            <person name="Hernandez J."/>
            <person name="Hodgson A.V."/>
            <person name="Hume J."/>
            <person name="Jackson A."/>
            <person name="Khan Z.M."/>
            <person name="Kovar-Smith C."/>
            <person name="Lewis L.R."/>
            <person name="Lozado R.J."/>
            <person name="Metzker M.L."/>
            <person name="Milosavljevic A."/>
            <person name="Miner G.R."/>
            <person name="Montgomery K.T."/>
            <person name="Morgan M.B."/>
            <person name="Nazareth L.V."/>
            <person name="Scott G."/>
            <person name="Sodergren E."/>
            <person name="Song X.-Z."/>
            <person name="Steffen D."/>
            <person name="Lovering R.C."/>
            <person name="Wheeler D.A."/>
            <person name="Worley K.C."/>
            <person name="Yuan Y."/>
            <person name="Zhang Z."/>
            <person name="Adams C.Q."/>
            <person name="Ansari-Lari M.A."/>
            <person name="Ayele M."/>
            <person name="Brown M.J."/>
            <person name="Chen G."/>
            <person name="Chen Z."/>
            <person name="Clerc-Blankenburg K.P."/>
            <person name="Davis C."/>
            <person name="Delgado O."/>
            <person name="Dinh H.H."/>
            <person name="Draper H."/>
            <person name="Gonzalez-Garay M.L."/>
            <person name="Havlak P."/>
            <person name="Jackson L.R."/>
            <person name="Jacob L.S."/>
            <person name="Kelly S.H."/>
            <person name="Li L."/>
            <person name="Li Z."/>
            <person name="Liu J."/>
            <person name="Liu W."/>
            <person name="Lu J."/>
            <person name="Maheshwari M."/>
            <person name="Nguyen B.-V."/>
            <person name="Okwuonu G.O."/>
            <person name="Pasternak S."/>
            <person name="Perez L.M."/>
            <person name="Plopper F.J.H."/>
            <person name="Santibanez J."/>
            <person name="Shen H."/>
            <person name="Tabor P.E."/>
            <person name="Verduzco D."/>
            <person name="Waldron L."/>
            <person name="Wang Q."/>
            <person name="Williams G.A."/>
            <person name="Zhang J."/>
            <person name="Zhou J."/>
            <person name="Allen C.C."/>
            <person name="Amin A.G."/>
            <person name="Anyalebechi V."/>
            <person name="Bailey M."/>
            <person name="Barbaria J.A."/>
            <person name="Bimage K.E."/>
            <person name="Bryant N.P."/>
            <person name="Burch P.E."/>
            <person name="Burkett C.E."/>
            <person name="Burrell K.L."/>
            <person name="Calderon E."/>
            <person name="Cardenas V."/>
            <person name="Carter K."/>
            <person name="Casias K."/>
            <person name="Cavazos I."/>
            <person name="Cavazos S.R."/>
            <person name="Ceasar H."/>
            <person name="Chacko J."/>
            <person name="Chan S.N."/>
            <person name="Chavez D."/>
            <person name="Christopoulos C."/>
            <person name="Chu J."/>
            <person name="Cockrell R."/>
            <person name="Cox C.D."/>
            <person name="Dang M."/>
            <person name="Dathorne S.R."/>
            <person name="David R."/>
            <person name="Davis C.M."/>
            <person name="Davy-Carroll L."/>
            <person name="Deshazo D.R."/>
            <person name="Donlin J.E."/>
            <person name="D'Souza L."/>
            <person name="Eaves K.A."/>
            <person name="Egan A."/>
            <person name="Emery-Cohen A.J."/>
            <person name="Escotto M."/>
            <person name="Flagg N."/>
            <person name="Forbes L.D."/>
            <person name="Gabisi A.M."/>
            <person name="Garza M."/>
            <person name="Hamilton C."/>
            <person name="Henderson N."/>
            <person name="Hernandez O."/>
            <person name="Hines S."/>
            <person name="Hogues M.E."/>
            <person name="Huang M."/>
            <person name="Idlebird D.G."/>
            <person name="Johnson R."/>
            <person name="Jolivet A."/>
            <person name="Jones S."/>
            <person name="Kagan R."/>
            <person name="King L.M."/>
            <person name="Leal B."/>
            <person name="Lebow H."/>
            <person name="Lee S."/>
            <person name="LeVan J.M."/>
            <person name="Lewis L.C."/>
            <person name="London P."/>
            <person name="Lorensuhewa L.M."/>
            <person name="Loulseged H."/>
            <person name="Lovett D.A."/>
            <person name="Lucier A."/>
            <person name="Lucier R.L."/>
            <person name="Ma J."/>
            <person name="Madu R.C."/>
            <person name="Mapua P."/>
            <person name="Martindale A.D."/>
            <person name="Martinez E."/>
            <person name="Massey E."/>
            <person name="Mawhiney S."/>
            <person name="Meador M.G."/>
            <person name="Mendez S."/>
            <person name="Mercado C."/>
            <person name="Mercado I.C."/>
            <person name="Merritt C.E."/>
            <person name="Miner Z.L."/>
            <person name="Minja E."/>
            <person name="Mitchell T."/>
            <person name="Mohabbat F."/>
            <person name="Mohabbat K."/>
            <person name="Montgomery B."/>
            <person name="Moore N."/>
            <person name="Morris S."/>
            <person name="Munidasa M."/>
            <person name="Ngo R.N."/>
            <person name="Nguyen N.B."/>
            <person name="Nickerson E."/>
            <person name="Nwaokelemeh O.O."/>
            <person name="Nwokenkwo S."/>
            <person name="Obregon M."/>
            <person name="Oguh M."/>
            <person name="Oragunye N."/>
            <person name="Oviedo R.J."/>
            <person name="Parish B.J."/>
            <person name="Parker D.N."/>
            <person name="Parrish J."/>
            <person name="Parks K.L."/>
            <person name="Paul H.A."/>
            <person name="Payton B.A."/>
            <person name="Perez A."/>
            <person name="Perrin W."/>
            <person name="Pickens A."/>
            <person name="Primus E.L."/>
            <person name="Pu L.-L."/>
            <person name="Puazo M."/>
            <person name="Quiles M.M."/>
            <person name="Quiroz J.B."/>
            <person name="Rabata D."/>
            <person name="Reeves K."/>
            <person name="Ruiz S.J."/>
            <person name="Shao H."/>
            <person name="Sisson I."/>
            <person name="Sonaike T."/>
            <person name="Sorelle R.P."/>
            <person name="Sutton A.E."/>
            <person name="Svatek A.F."/>
            <person name="Svetz L.A."/>
            <person name="Tamerisa K.S."/>
            <person name="Taylor T.R."/>
            <person name="Teague B."/>
            <person name="Thomas N."/>
            <person name="Thorn R.D."/>
            <person name="Trejos Z.Y."/>
            <person name="Trevino B.K."/>
            <person name="Ukegbu O.N."/>
            <person name="Urban J.B."/>
            <person name="Vasquez L.I."/>
            <person name="Vera V.A."/>
            <person name="Villasana D.M."/>
            <person name="Wang L."/>
            <person name="Ward-Moore S."/>
            <person name="Warren J.T."/>
            <person name="Wei X."/>
            <person name="White F."/>
            <person name="Williamson A.L."/>
            <person name="Wleczyk R."/>
            <person name="Wooden H.S."/>
            <person name="Wooden S.H."/>
            <person name="Yen J."/>
            <person name="Yoon L."/>
            <person name="Yoon V."/>
            <person name="Zorrilla S.E."/>
            <person name="Nelson D."/>
            <person name="Kucherlapati R."/>
            <person name="Weinstock G."/>
            <person name="Gibbs R.A."/>
        </authorList>
    </citation>
    <scope>NUCLEOTIDE SEQUENCE [LARGE SCALE GENOMIC DNA]</scope>
</reference>
<reference key="6">
    <citation type="journal article" date="2004" name="Genome Res.">
        <title>The status, quality, and expansion of the NIH full-length cDNA project: the Mammalian Gene Collection (MGC).</title>
        <authorList>
            <consortium name="The MGC Project Team"/>
        </authorList>
    </citation>
    <scope>NUCLEOTIDE SEQUENCE [LARGE SCALE MRNA] (ISOFORM 1)</scope>
    <source>
        <tissue>Muscle</tissue>
        <tissue>Uterus</tissue>
    </source>
</reference>
<reference key="7">
    <citation type="journal article" date="2004" name="Mol. Cell">
        <title>Dual role of BRUCE as an antiapoptotic IAP and a chimeric E2/E3 ubiquitin ligase.</title>
        <authorList>
            <person name="Bartke T."/>
            <person name="Pohl C."/>
            <person name="Pyrowolakis G."/>
            <person name="Jentsch S."/>
        </authorList>
    </citation>
    <scope>FUNCTION</scope>
    <scope>INTERACTION WITH BIRC6/BRUCE</scope>
</reference>
<reference key="8">
    <citation type="journal article" date="2006" name="Cell Death Differ.">
        <title>Livin promotes Smac/DIABLO degradation by ubiquitin-proteasome pathway.</title>
        <authorList>
            <person name="Ma L."/>
            <person name="Huang Y."/>
            <person name="Song Z."/>
            <person name="Feng S."/>
            <person name="Tian X."/>
            <person name="Du W."/>
            <person name="Qiu X."/>
            <person name="Heese K."/>
            <person name="Wu M."/>
        </authorList>
    </citation>
    <scope>UBIQUITINATION BY BIRC7/LIVIN</scope>
    <scope>INTERACTION WITH BIRC7/LIVIN</scope>
</reference>
<reference key="9">
    <citation type="journal article" date="2011" name="Apoptosis">
        <title>ARTS binds to a distinct domain in XIAP-BIR3 and promotes apoptosis by a mechanism that is different from other IAP-antagonists.</title>
        <authorList>
            <person name="Bornstein B."/>
            <person name="Gottfried Y."/>
            <person name="Edison N."/>
            <person name="Shekhtman A."/>
            <person name="Lev T."/>
            <person name="Glaser F."/>
            <person name="Larisch S."/>
        </authorList>
    </citation>
    <scope>INTERACTION WITH XIAP</scope>
</reference>
<reference key="10">
    <citation type="journal article" date="2011" name="BMC Syst. Biol.">
        <title>Initial characterization of the human central proteome.</title>
        <authorList>
            <person name="Burkard T.R."/>
            <person name="Planyavsky M."/>
            <person name="Kaupe I."/>
            <person name="Breitwieser F.P."/>
            <person name="Buerckstuemmer T."/>
            <person name="Bennett K.L."/>
            <person name="Superti-Furga G."/>
            <person name="Colinge J."/>
        </authorList>
    </citation>
    <scope>IDENTIFICATION BY MASS SPECTROMETRY [LARGE SCALE ANALYSIS]</scope>
</reference>
<reference key="11">
    <citation type="journal article" date="2011" name="J. Biol. Chem.">
        <title>Survivin monomer plays an essential role in apoptosis regulation.</title>
        <authorList>
            <person name="Pavlyukov M.S."/>
            <person name="Antipova N.V."/>
            <person name="Balashova M.V."/>
            <person name="Vinogradova T.V."/>
            <person name="Kopantzev E.P."/>
            <person name="Shakhparonov M.I."/>
        </authorList>
    </citation>
    <scope>INTERACTION WITH BIRC5/SURVIVIN</scope>
</reference>
<reference key="12">
    <citation type="journal article" date="2013" name="J. Biol. Chem.">
        <title>Identification of a novel anti-apoptotic E3 ubiquitin ligase that ubiquitinates antagonists of inhibitor of apoptosis proteins SMAC, HtrA2, and ARTS.</title>
        <authorList>
            <person name="Kim J.B."/>
            <person name="Kim S.Y."/>
            <person name="Kim B.M."/>
            <person name="Lee H."/>
            <person name="Kim I."/>
            <person name="Yun J."/>
            <person name="Jo Y."/>
            <person name="Oh T."/>
            <person name="Jo Y."/>
            <person name="Chae H.D."/>
            <person name="Shin D.Y."/>
        </authorList>
    </citation>
    <scope>INTERACTION WITH AREL1</scope>
</reference>
<reference key="13">
    <citation type="journal article" date="2014" name="J. Proteomics">
        <title>An enzyme assisted RP-RPLC approach for in-depth analysis of human liver phosphoproteome.</title>
        <authorList>
            <person name="Bian Y."/>
            <person name="Song C."/>
            <person name="Cheng K."/>
            <person name="Dong M."/>
            <person name="Wang F."/>
            <person name="Huang J."/>
            <person name="Sun D."/>
            <person name="Wang L."/>
            <person name="Ye M."/>
            <person name="Zou H."/>
        </authorList>
    </citation>
    <scope>IDENTIFICATION BY MASS SPECTROMETRY [LARGE SCALE ANALYSIS]</scope>
    <source>
        <tissue>Liver</tissue>
    </source>
</reference>
<reference key="14">
    <citation type="journal article" date="2015" name="Proteomics">
        <title>N-terminome analysis of the human mitochondrial proteome.</title>
        <authorList>
            <person name="Vaca Jacome A.S."/>
            <person name="Rabilloud T."/>
            <person name="Schaeffer-Reiss C."/>
            <person name="Rompais M."/>
            <person name="Ayoub D."/>
            <person name="Lane L."/>
            <person name="Bairoch A."/>
            <person name="Van Dorsselaer A."/>
            <person name="Carapito C."/>
        </authorList>
    </citation>
    <scope>IDENTIFICATION BY MASS SPECTROMETRY [LARGE SCALE ANALYSIS]</scope>
</reference>
<reference key="15">
    <citation type="journal article" date="2017" name="Nat. Cell Biol.">
        <title>PARL mediates Smac proteolytic maturation in mitochondria to promote apoptosis.</title>
        <authorList>
            <person name="Saita S."/>
            <person name="Nolte H."/>
            <person name="Fiedler K.U."/>
            <person name="Kashkar H."/>
            <person name="Venne A.S."/>
            <person name="Zahedi R.P."/>
            <person name="Krueger M."/>
            <person name="Langer T."/>
        </authorList>
    </citation>
    <scope>INTERACTION WITH XIAP</scope>
    <scope>SUBCELLULAR LOCATION</scope>
    <scope>PROTEOLYTIC CLEAVAGE</scope>
</reference>
<reference evidence="23" key="16">
    <citation type="journal article" date="2000" name="Nature">
        <title>Structural and biochemical basis of apoptotic activation by Smac/DIABLO.</title>
        <authorList>
            <person name="Chai J."/>
            <person name="Du C."/>
            <person name="Wu J.W."/>
            <person name="Kyin S."/>
            <person name="Wang X."/>
            <person name="Shi Y."/>
        </authorList>
    </citation>
    <scope>X-RAY CRYSTALLOGRAPHY (2.2 ANGSTROMS) OF 56-239</scope>
    <scope>SUBUNIT</scope>
</reference>
<reference evidence="24" key="17">
    <citation type="journal article" date="2000" name="Nature">
        <title>Structural basis for binding of Smac/DIABLO to the XIAP BIR3 domain.</title>
        <authorList>
            <person name="Liu Z."/>
            <person name="Sun C."/>
            <person name="Olejniczak E.T."/>
            <person name="Meadows R.P."/>
            <person name="Betz S.F."/>
            <person name="Oost T."/>
            <person name="Herrmann J."/>
            <person name="Wu J.C."/>
            <person name="Fesik S.W."/>
        </authorList>
    </citation>
    <scope>STRUCTURE BY NMR OF 56-64 IN COMPLEX WITH XIAP</scope>
</reference>
<reference evidence="25" key="18">
    <citation type="journal article" date="2009" name="Acta Crystallogr. D">
        <title>The structure of the BIR3 domain of cIAP1 in complex with the N-terminal peptides of SMAC and caspase-9.</title>
        <authorList>
            <person name="Kulathila R."/>
            <person name="Vash B."/>
            <person name="Sage D."/>
            <person name="Cornell-Kennon S."/>
            <person name="Wright K."/>
            <person name="Koehn J."/>
            <person name="Stams T."/>
            <person name="Clark K."/>
            <person name="Price A."/>
        </authorList>
    </citation>
    <scope>X-RAY CRYSTALLOGRAPHY (2.30 ANGSTROMS) OF 56-61</scope>
    <scope>INTERACTION WITH BIRC2</scope>
</reference>
<reference evidence="28 29" key="19">
    <citation type="journal article" date="2023" name="Science">
        <title>Structures of BIRC6-client complexes provide a mechanism of SMAC-mediated release of caspases.</title>
        <authorList>
            <person name="Hunkeler M."/>
            <person name="Jin C.Y."/>
            <person name="Fischer E.S."/>
        </authorList>
    </citation>
    <scope>STRUCTURE BY ELECTRON MICROSCOPY (3.04 ANGSTROMS) OF 56-239 IN COMPLEX WITH BIRC6</scope>
    <scope>FUNCTION</scope>
    <scope>SUBUNIT</scope>
    <scope>INTERACTION WITH BIRC6</scope>
    <scope>UBIQUITINATION BY BIRC6</scope>
    <scope>MUTAGENESIS OF ALA-56</scope>
</reference>
<reference evidence="26" key="20">
    <citation type="journal article" date="2023" name="Science">
        <title>Structural basis for SMAC-mediated antagonism of caspase inhibition by the giant ubiquitin ligase BIRC6.</title>
        <authorList>
            <person name="Dietz L."/>
            <person name="Ellison C.J."/>
            <person name="Riechmann C."/>
            <person name="Cassidy C.K."/>
            <person name="Felfoldi F.D."/>
            <person name="Pinto-Fernandez A."/>
            <person name="Kessler B.M."/>
            <person name="Elliott P.R."/>
        </authorList>
    </citation>
    <scope>STRUCTURE BY ELECTRON MICROSCOPY (3.00 ANGSTROMS) OF 56-239 IN COMPLEX WITH BIRC6</scope>
    <scope>FUNCTION</scope>
    <scope>SUBUNIT</scope>
    <scope>INTERACTION WITH BIRC6</scope>
    <scope>UBIQUITINATION BY BIRC6</scope>
    <scope>MUTAGENESIS OF VAL-81</scope>
</reference>
<reference evidence="27" key="21">
    <citation type="journal article" date="2023" name="Science">
        <title>Structural basis for regulation of apoptosis and autophagy by the BIRC6/SMAC complex.</title>
        <authorList>
            <person name="Ehrmann J.F."/>
            <person name="Grabarczyk D.B."/>
            <person name="Heinke M."/>
            <person name="Deszcz L."/>
            <person name="Kurzbauer R."/>
            <person name="Hudecz O."/>
            <person name="Shulkina A."/>
            <person name="Gogova R."/>
            <person name="Meinhart A."/>
            <person name="Versteeg G.A."/>
            <person name="Clausen T."/>
        </authorList>
    </citation>
    <scope>STRUCTURE BY ELECTRON MICROSCOPY (7.20 ANGSTROMS) OF 56-239 IN COMPLEX WITH BIRC6</scope>
    <scope>FUNCTION</scope>
    <scope>SUBUNIT</scope>
    <scope>INTERACTION WITH BIRC6</scope>
    <scope>UBIQUITINATION BY BIRC6</scope>
</reference>
<reference key="22">
    <citation type="journal article" date="2011" name="Am. J. Hum. Genet.">
        <title>Functional mutation of SMAC/DIABLO, encoding a mitochondrial proapoptotic protein, causes human progressive hearing loss DFNA64.</title>
        <authorList>
            <person name="Cheng J."/>
            <person name="Zhu Y."/>
            <person name="He S."/>
            <person name="Lu Y."/>
            <person name="Chen J."/>
            <person name="Han B."/>
            <person name="Petrillo M."/>
            <person name="Wrzeszczynski K.O."/>
            <person name="Yang S."/>
            <person name="Dai P."/>
            <person name="Zhai S."/>
            <person name="Han D."/>
            <person name="Zhang M.Q."/>
            <person name="Li W."/>
            <person name="Liu X."/>
            <person name="Li H."/>
            <person name="Chen Z.Y."/>
            <person name="Yuan H."/>
        </authorList>
    </citation>
    <scope>VARIANT DFNA64 LEU-126</scope>
    <scope>CHARACTERIZATION OF DFNA64 LEU-126</scope>
</reference>
<keyword id="KW-0002">3D-structure</keyword>
<keyword id="KW-0025">Alternative splicing</keyword>
<keyword id="KW-0053">Apoptosis</keyword>
<keyword id="KW-0963">Cytoplasm</keyword>
<keyword id="KW-0209">Deafness</keyword>
<keyword id="KW-0903">Direct protein sequencing</keyword>
<keyword id="KW-0225">Disease variant</keyword>
<keyword id="KW-0496">Mitochondrion</keyword>
<keyword id="KW-1010">Non-syndromic deafness</keyword>
<keyword id="KW-1267">Proteomics identification</keyword>
<keyword id="KW-1185">Reference proteome</keyword>
<keyword id="KW-0809">Transit peptide</keyword>
<keyword id="KW-0832">Ubl conjugation</keyword>
<evidence type="ECO:0000250" key="1">
    <source>
        <dbReference type="UniProtKB" id="Q9JIQ3"/>
    </source>
</evidence>
<evidence type="ECO:0000256" key="2">
    <source>
        <dbReference type="SAM" id="MobiDB-lite"/>
    </source>
</evidence>
<evidence type="ECO:0000269" key="3">
    <source>
    </source>
</evidence>
<evidence type="ECO:0000269" key="4">
    <source>
    </source>
</evidence>
<evidence type="ECO:0000269" key="5">
    <source>
    </source>
</evidence>
<evidence type="ECO:0000269" key="6">
    <source>
    </source>
</evidence>
<evidence type="ECO:0000269" key="7">
    <source>
    </source>
</evidence>
<evidence type="ECO:0000269" key="8">
    <source>
    </source>
</evidence>
<evidence type="ECO:0000269" key="9">
    <source>
    </source>
</evidence>
<evidence type="ECO:0000269" key="10">
    <source>
    </source>
</evidence>
<evidence type="ECO:0000269" key="11">
    <source>
    </source>
</evidence>
<evidence type="ECO:0000269" key="12">
    <source>
    </source>
</evidence>
<evidence type="ECO:0000269" key="13">
    <source>
    </source>
</evidence>
<evidence type="ECO:0000269" key="14">
    <source>
    </source>
</evidence>
<evidence type="ECO:0000269" key="15">
    <source>
    </source>
</evidence>
<evidence type="ECO:0000269" key="16">
    <source>
    </source>
</evidence>
<evidence type="ECO:0000269" key="17">
    <source>
    </source>
</evidence>
<evidence type="ECO:0000303" key="18">
    <source>
    </source>
</evidence>
<evidence type="ECO:0000303" key="19">
    <source>
    </source>
</evidence>
<evidence type="ECO:0000303" key="20">
    <source>
    </source>
</evidence>
<evidence type="ECO:0000305" key="21"/>
<evidence type="ECO:0000312" key="22">
    <source>
        <dbReference type="HGNC" id="HGNC:21528"/>
    </source>
</evidence>
<evidence type="ECO:0007744" key="23">
    <source>
        <dbReference type="PDB" id="1FEW"/>
    </source>
</evidence>
<evidence type="ECO:0007744" key="24">
    <source>
        <dbReference type="PDB" id="1G3F"/>
    </source>
</evidence>
<evidence type="ECO:0007744" key="25">
    <source>
        <dbReference type="PDB" id="3D9U"/>
    </source>
</evidence>
<evidence type="ECO:0007744" key="26">
    <source>
        <dbReference type="PDB" id="8ATO"/>
    </source>
</evidence>
<evidence type="ECO:0007744" key="27">
    <source>
        <dbReference type="PDB" id="8AUW"/>
    </source>
</evidence>
<evidence type="ECO:0007744" key="28">
    <source>
        <dbReference type="PDB" id="8E2I"/>
    </source>
</evidence>
<evidence type="ECO:0007744" key="29">
    <source>
        <dbReference type="PDB" id="8E2J"/>
    </source>
</evidence>
<evidence type="ECO:0007829" key="30">
    <source>
        <dbReference type="PDB" id="1FEW"/>
    </source>
</evidence>
<evidence type="ECO:0007829" key="31">
    <source>
        <dbReference type="PDB" id="1XB0"/>
    </source>
</evidence>
<evidence type="ECO:0007829" key="32">
    <source>
        <dbReference type="PDB" id="4TX5"/>
    </source>
</evidence>
<protein>
    <recommendedName>
        <fullName evidence="22">Diablo IAP-binding mitochondrial protein</fullName>
    </recommendedName>
    <alternativeName>
        <fullName evidence="22">Diablo homolog, mitochondrial</fullName>
    </alternativeName>
    <alternativeName>
        <fullName evidence="22">Direct IAP-binding protein with low pI</fullName>
    </alternativeName>
    <alternativeName>
        <fullName evidence="18">Second mitochondria-derived activator of caspases</fullName>
        <shortName evidence="18">SMAC</shortName>
    </alternativeName>
    <component>
        <recommendedName>
            <fullName>Diablo IAP-binding mitochondrial protein, cleaved form</fullName>
        </recommendedName>
    </component>
</protein>
<accession>Q9NR28</accession>
<accession>B2RDQ0</accession>
<accession>Q6W3F3</accession>
<accession>Q96LV0</accession>
<accession>Q9BT11</accession>
<accession>Q9HAV6</accession>
<proteinExistence type="evidence at protein level"/>
<organism>
    <name type="scientific">Homo sapiens</name>
    <name type="common">Human</name>
    <dbReference type="NCBI Taxonomy" id="9606"/>
    <lineage>
        <taxon>Eukaryota</taxon>
        <taxon>Metazoa</taxon>
        <taxon>Chordata</taxon>
        <taxon>Craniata</taxon>
        <taxon>Vertebrata</taxon>
        <taxon>Euteleostomi</taxon>
        <taxon>Mammalia</taxon>
        <taxon>Eutheria</taxon>
        <taxon>Euarchontoglires</taxon>
        <taxon>Primates</taxon>
        <taxon>Haplorrhini</taxon>
        <taxon>Catarrhini</taxon>
        <taxon>Hominidae</taxon>
        <taxon>Homo</taxon>
    </lineage>
</organism>
<comment type="function">
    <text evidence="3 7 15 16 17">Promotes apoptosis by activating caspases in the cytochrome c/Apaf-1/caspase-9 pathway. Acts by opposing the inhibitory activity of inhibitor of apoptosis proteins (IAP). Inhibits the activity of BIRC6/BRUCE by inhibiting its binding to caspases (PubMed:15200957, PubMed:36758104, PubMed:36758105, PubMed:36758106).</text>
</comment>
<comment type="function">
    <molecule>Isoform 3</molecule>
    <text evidence="6">Attenuates the stability and apoptosis-inhibiting activity of XIAP/BIRC4 by promoting XIAP/BIRC4 ubiquitination and degradation through the ubiquitin-proteasome pathway. Also disrupts XIAP/BIRC4 interacting with processed caspase-9 and promotes caspase-3 activation.</text>
</comment>
<comment type="function">
    <molecule>Isoform 1</molecule>
    <text evidence="6">Defective in the capacity to down-regulate the XIAP/BIRC4 abundance.</text>
</comment>
<comment type="subunit">
    <text evidence="1 4 5 7 8 9 10 11 13 14 15 16 17">Homodimer (PubMed:10972280, PubMed:36758104, PubMed:36758105, PubMed:36758106). Interacts with BIRC2/c-IAP1 (via BIR3 domain) (PubMed:19153467). Interacts with BIRC6/BRUCE; inhibits BIRC6 activity (PubMed:15200957, PubMed:36758104, PubMed:36758105, PubMed:36758106). Interacts with BIRC7/livin (PubMed:16729033). Interacts with XIAP/BIRC4 (via BIR3 domain) (PubMed:11140637, PubMed:21695558, PubMed:28288130). Interacts with the monomeric and dimeric form of BIRC5/survivin (PubMed:21536684). Interacts with AREL1 (via HECT domain); in the cytoplasm following induction of apoptosis (PubMed:23479728). Interacts with BEX3 (By similarity).</text>
</comment>
<comment type="interaction">
    <interactant intactId="EBI-517508">
        <id>Q9NR28</id>
    </interactant>
    <interactant intactId="EBI-11522760">
        <id>Q6RW13-2</id>
        <label>AGTRAP</label>
    </interactant>
    <organismsDiffer>false</organismsDiffer>
    <experiments>6</experiments>
</comment>
<comment type="interaction">
    <interactant intactId="EBI-517508">
        <id>Q9NR28</id>
    </interactant>
    <interactant intactId="EBI-18302142">
        <id>P55056</id>
        <label>APOC4</label>
    </interactant>
    <organismsDiffer>false</organismsDiffer>
    <experiments>3</experiments>
</comment>
<comment type="interaction">
    <interactant intactId="EBI-517508">
        <id>Q9NR28</id>
    </interactant>
    <interactant intactId="EBI-714543">
        <id>Q15041</id>
        <label>ARL6IP1</label>
    </interactant>
    <organismsDiffer>false</organismsDiffer>
    <experiments>9</experiments>
</comment>
<comment type="interaction">
    <interactant intactId="EBI-517508">
        <id>Q9NR28</id>
    </interactant>
    <interactant intactId="EBI-721179">
        <id>P27449</id>
        <label>ATP6V0C</label>
    </interactant>
    <organismsDiffer>false</organismsDiffer>
    <experiments>3</experiments>
</comment>
<comment type="interaction">
    <interactant intactId="EBI-517508">
        <id>Q9NR28</id>
    </interactant>
    <interactant intactId="EBI-514538">
        <id>Q13490</id>
        <label>BIRC2</label>
    </interactant>
    <organismsDiffer>false</organismsDiffer>
    <experiments>7</experiments>
</comment>
<comment type="interaction">
    <interactant intactId="EBI-517508">
        <id>Q9NR28</id>
    </interactant>
    <interactant intactId="EBI-518823">
        <id>O15392</id>
        <label>BIRC5</label>
    </interactant>
    <organismsDiffer>false</organismsDiffer>
    <experiments>2</experiments>
</comment>
<comment type="interaction">
    <interactant intactId="EBI-517508">
        <id>Q9NR28</id>
    </interactant>
    <interactant intactId="EBI-517623">
        <id>Q96CA5</id>
        <label>BIRC7</label>
    </interactant>
    <organismsDiffer>false</organismsDiffer>
    <experiments>9</experiments>
</comment>
<comment type="interaction">
    <interactant intactId="EBI-517508">
        <id>Q9NR28</id>
    </interactant>
    <interactant intactId="EBI-17278014">
        <id>Q8IZR5-2</id>
        <label>CMTM4</label>
    </interactant>
    <organismsDiffer>false</organismsDiffer>
    <experiments>3</experiments>
</comment>
<comment type="interaction">
    <interactant intactId="EBI-517508">
        <id>Q9NR28</id>
    </interactant>
    <interactant intactId="EBI-7962814">
        <id>Q9GZP9</id>
        <label>DERL2</label>
    </interactant>
    <organismsDiffer>false</organismsDiffer>
    <experiments>3</experiments>
</comment>
<comment type="interaction">
    <interactant intactId="EBI-517508">
        <id>Q9NR28</id>
    </interactant>
    <interactant intactId="EBI-12831978">
        <id>Q6ZPD8</id>
        <label>DGAT2L6</label>
    </interactant>
    <organismsDiffer>false</organismsDiffer>
    <experiments>3</experiments>
</comment>
<comment type="interaction">
    <interactant intactId="EBI-517508">
        <id>Q9NR28</id>
    </interactant>
    <interactant intactId="EBI-746300">
        <id>Q96LJ7</id>
        <label>DHRS1</label>
    </interactant>
    <organismsDiffer>false</organismsDiffer>
    <experiments>3</experiments>
</comment>
<comment type="interaction">
    <interactant intactId="EBI-517508">
        <id>Q9NR28</id>
    </interactant>
    <interactant intactId="EBI-2339219">
        <id>Q08426</id>
        <label>EHHADH</label>
    </interactant>
    <organismsDiffer>false</organismsDiffer>
    <experiments>3</experiments>
</comment>
<comment type="interaction">
    <interactant intactId="EBI-517508">
        <id>Q9NR28</id>
    </interactant>
    <interactant intactId="EBI-3943864">
        <id>Q8N9I5</id>
        <label>FADS6</label>
    </interactant>
    <organismsDiffer>false</organismsDiffer>
    <experiments>3</experiments>
</comment>
<comment type="interaction">
    <interactant intactId="EBI-517508">
        <id>Q9NR28</id>
    </interactant>
    <interactant intactId="EBI-3918971">
        <id>Q9Y680</id>
        <label>FKBP7</label>
    </interactant>
    <organismsDiffer>false</organismsDiffer>
    <experiments>3</experiments>
</comment>
<comment type="interaction">
    <interactant intactId="EBI-517508">
        <id>Q9NR28</id>
    </interactant>
    <interactant intactId="EBI-18053395">
        <id>Q7Z5P4</id>
        <label>HSD17B13</label>
    </interactant>
    <organismsDiffer>false</organismsDiffer>
    <experiments>3</experiments>
</comment>
<comment type="interaction">
    <interactant intactId="EBI-517508">
        <id>Q9NR28</id>
    </interactant>
    <interactant intactId="EBI-1053887">
        <id>Q5XKP0</id>
        <label>MICOS13</label>
    </interactant>
    <organismsDiffer>false</organismsDiffer>
    <experiments>3</experiments>
</comment>
<comment type="interaction">
    <interactant intactId="EBI-517508">
        <id>Q9NR28</id>
    </interactant>
    <interactant intactId="EBI-719403">
        <id>O95563</id>
        <label>MPC2</label>
    </interactant>
    <organismsDiffer>false</organismsDiffer>
    <experiments>3</experiments>
</comment>
<comment type="interaction">
    <interactant intactId="EBI-517508">
        <id>Q9NR28</id>
    </interactant>
    <interactant intactId="EBI-724207">
        <id>Q15390</id>
        <label>MTFR1</label>
    </interactant>
    <organismsDiffer>false</organismsDiffer>
    <experiments>5</experiments>
</comment>
<comment type="interaction">
    <interactant intactId="EBI-517508">
        <id>Q9NR28</id>
    </interactant>
    <interactant intactId="EBI-704279">
        <id>Q05655</id>
        <label>PRKCD</label>
    </interactant>
    <organismsDiffer>false</organismsDiffer>
    <experiments>4</experiments>
</comment>
<comment type="interaction">
    <interactant intactId="EBI-517508">
        <id>Q9NR28</id>
    </interactant>
    <interactant intactId="EBI-17589229">
        <id>Q6NTF9-3</id>
        <label>RHBDD2</label>
    </interactant>
    <organismsDiffer>false</organismsDiffer>
    <experiments>3</experiments>
</comment>
<comment type="interaction">
    <interactant intactId="EBI-517508">
        <id>Q9NR28</id>
    </interactant>
    <interactant intactId="EBI-2806908">
        <id>Q96LZ7</id>
        <label>RMDN2</label>
    </interactant>
    <organismsDiffer>false</organismsDiffer>
    <experiments>3</experiments>
</comment>
<comment type="interaction">
    <interactant intactId="EBI-517508">
        <id>Q9NR28</id>
    </interactant>
    <interactant intactId="EBI-8652744">
        <id>Q96IW7</id>
        <label>SEC22A</label>
    </interactant>
    <organismsDiffer>false</organismsDiffer>
    <experiments>3</experiments>
</comment>
<comment type="interaction">
    <interactant intactId="EBI-517508">
        <id>Q9NR28</id>
    </interactant>
    <interactant intactId="EBI-2854842">
        <id>Q8WV19</id>
        <label>SFT2D1</label>
    </interactant>
    <organismsDiffer>false</organismsDiffer>
    <experiments>3</experiments>
</comment>
<comment type="interaction">
    <interactant intactId="EBI-517508">
        <id>Q9NR28</id>
    </interactant>
    <interactant intactId="EBI-3940816">
        <id>Q9BYT1</id>
        <label>SLC17A9</label>
    </interactant>
    <organismsDiffer>false</organismsDiffer>
    <experiments>3</experiments>
</comment>
<comment type="interaction">
    <interactant intactId="EBI-517508">
        <id>Q9NR28</id>
    </interactant>
    <interactant intactId="EBI-3907610">
        <id>Q8N2U9</id>
        <label>SLC66A2</label>
    </interactant>
    <organismsDiffer>false</organismsDiffer>
    <experiments>3</experiments>
</comment>
<comment type="interaction">
    <interactant intactId="EBI-517508">
        <id>Q9NR28</id>
    </interactant>
    <interactant intactId="EBI-20117546">
        <id>Q9H169-2</id>
        <label>STMN4</label>
    </interactant>
    <organismsDiffer>false</organismsDiffer>
    <experiments>3</experiments>
</comment>
<comment type="interaction">
    <interactant intactId="EBI-517508">
        <id>Q9NR28</id>
    </interactant>
    <interactant intactId="EBI-9071725">
        <id>P08247</id>
        <label>SYP</label>
    </interactant>
    <organismsDiffer>false</organismsDiffer>
    <experiments>3</experiments>
</comment>
<comment type="interaction">
    <interactant intactId="EBI-517508">
        <id>Q9NR28</id>
    </interactant>
    <interactant intactId="EBI-6268651">
        <id>Q9NPL8</id>
        <label>TIMMDC1</label>
    </interactant>
    <organismsDiffer>false</organismsDiffer>
    <experiments>3</experiments>
</comment>
<comment type="interaction">
    <interactant intactId="EBI-517508">
        <id>Q9NR28</id>
    </interactant>
    <interactant intactId="EBI-517127">
        <id>P98170</id>
        <label>XIAP</label>
    </interactant>
    <organismsDiffer>false</organismsDiffer>
    <experiments>11</experiments>
</comment>
<comment type="interaction">
    <interactant intactId="EBI-15490322">
        <id>Q9NR28-1</id>
    </interactant>
    <interactant intactId="EBI-517127">
        <id>P98170</id>
        <label>XIAP</label>
    </interactant>
    <organismsDiffer>false</organismsDiffer>
    <experiments>4</experiments>
</comment>
<comment type="subcellular location">
    <subcellularLocation>
        <location evidence="4 6 14">Mitochondrion</location>
    </subcellularLocation>
    <subcellularLocation>
        <location evidence="3 14">Cytoplasm</location>
        <location evidence="3 14">Cytosol</location>
    </subcellularLocation>
    <text evidence="3 14">Released into the cytosol in a PARL-dependent manner when cells undergo apoptosis.</text>
</comment>
<comment type="alternative products">
    <event type="alternative splicing"/>
    <isoform>
        <id>Q9NR28-1</id>
        <name>1</name>
        <sequence type="displayed"/>
    </isoform>
    <isoform>
        <id>Q9NR28-2</id>
        <name>2</name>
        <name>Diablo-S</name>
        <sequence type="described" ref="VSP_004397"/>
    </isoform>
    <isoform>
        <id>Q9NR28-3</id>
        <name>3</name>
        <name>SMAC3</name>
        <sequence type="described" ref="VSP_042785"/>
    </isoform>
</comment>
<comment type="tissue specificity">
    <text evidence="3 6">Ubiquitously expressed with highest expression in testis. Expression is also high in heart, liver, kidney, spleen, prostate and ovary. Low in brain, lung, thymus and peripheral blood leukocytes. Isoform 3 is ubiquitously expressed.</text>
</comment>
<comment type="domain">
    <text>The mature N-terminus mediates interaction with XIAP/BIRC4.</text>
</comment>
<comment type="PTM">
    <text evidence="8 15 16 17">Ubiquitinated by BIRC7/livin (PubMed:16729033). Ubiquitinated by BIRC6 (PubMed:36758104, PubMed:36758105, PubMed:36758106).</text>
</comment>
<comment type="PTM">
    <text evidence="14">The precursor form is proteolytically cleaved by mitochondrial processing peptidase MPP to remove the transit peptide and produce an intermediate form. This is then processed by PARL to produce the mature cleaved form which is released from mitochondria into the cytosol in apoptotic cells.</text>
</comment>
<comment type="disease" evidence="12">
    <disease id="DI-03231">
        <name>Deafness, autosomal dominant, 64</name>
        <acronym>DFNA64</acronym>
        <description>A form of non-syndromic sensorineural hearing loss. Sensorineural deafness results from damage to the neural receptors of the inner ear, the nerve pathways to the brain, or the area of the brain that receives sound information.</description>
        <dbReference type="MIM" id="614152"/>
    </disease>
    <text>The disease is caused by variants affecting the gene represented in this entry.</text>
</comment>
<comment type="similarity">
    <text evidence="21">Belongs to the Smac/DIABLO protein family.</text>
</comment>
<sequence>MAALKSWLSRSVTSFFRYRQCLCVPVVANFKKRCFSELIRPWHKTVTIGFGVTLCAVPIAQKSEPHSLSSEALMRRAVSLVTDSTSTFLSQTTYALIEAITEYTKAVYTLTSLYRQYTSLLGKMNSEEEDEVWQVIIGARAEMTSKHQEYLKLETTWMTAVGLSEMAAEAAYQTGADQASITARNHIQLVKLQVEEVHQLSRKAETKLAEAQIEELRQKTQEEGEERAESEQEAYLRED</sequence>